<dbReference type="EC" id="4.1.1.32" evidence="1"/>
<dbReference type="EMBL" id="CP001463">
    <property type="protein sequence ID" value="ACS89219.1"/>
    <property type="molecule type" value="Genomic_DNA"/>
</dbReference>
<dbReference type="RefSeq" id="WP_012766180.1">
    <property type="nucleotide sequence ID" value="NC_012883.1"/>
</dbReference>
<dbReference type="SMR" id="C6A0S4"/>
<dbReference type="STRING" id="604354.TSIB_0151"/>
<dbReference type="GeneID" id="8095123"/>
<dbReference type="KEGG" id="tsi:TSIB_0151"/>
<dbReference type="eggNOG" id="arCOG05865">
    <property type="taxonomic scope" value="Archaea"/>
</dbReference>
<dbReference type="HOGENOM" id="CLU_028872_1_1_2"/>
<dbReference type="OrthoDB" id="55875at2157"/>
<dbReference type="UniPathway" id="UPA00138"/>
<dbReference type="Proteomes" id="UP000009079">
    <property type="component" value="Chromosome"/>
</dbReference>
<dbReference type="GO" id="GO:0005829">
    <property type="term" value="C:cytosol"/>
    <property type="evidence" value="ECO:0007669"/>
    <property type="project" value="TreeGrafter"/>
</dbReference>
<dbReference type="GO" id="GO:0005525">
    <property type="term" value="F:GTP binding"/>
    <property type="evidence" value="ECO:0007669"/>
    <property type="project" value="UniProtKB-UniRule"/>
</dbReference>
<dbReference type="GO" id="GO:0030145">
    <property type="term" value="F:manganese ion binding"/>
    <property type="evidence" value="ECO:0007669"/>
    <property type="project" value="UniProtKB-UniRule"/>
</dbReference>
<dbReference type="GO" id="GO:0004613">
    <property type="term" value="F:phosphoenolpyruvate carboxykinase (GTP) activity"/>
    <property type="evidence" value="ECO:0007669"/>
    <property type="project" value="UniProtKB-UniRule"/>
</dbReference>
<dbReference type="GO" id="GO:0071333">
    <property type="term" value="P:cellular response to glucose stimulus"/>
    <property type="evidence" value="ECO:0007669"/>
    <property type="project" value="TreeGrafter"/>
</dbReference>
<dbReference type="GO" id="GO:0006094">
    <property type="term" value="P:gluconeogenesis"/>
    <property type="evidence" value="ECO:0007669"/>
    <property type="project" value="UniProtKB-UniRule"/>
</dbReference>
<dbReference type="GO" id="GO:0046327">
    <property type="term" value="P:glycerol biosynthetic process from pyruvate"/>
    <property type="evidence" value="ECO:0007669"/>
    <property type="project" value="TreeGrafter"/>
</dbReference>
<dbReference type="GO" id="GO:0006107">
    <property type="term" value="P:oxaloacetate metabolic process"/>
    <property type="evidence" value="ECO:0007669"/>
    <property type="project" value="TreeGrafter"/>
</dbReference>
<dbReference type="GO" id="GO:0019543">
    <property type="term" value="P:propionate catabolic process"/>
    <property type="evidence" value="ECO:0007669"/>
    <property type="project" value="TreeGrafter"/>
</dbReference>
<dbReference type="GO" id="GO:0033993">
    <property type="term" value="P:response to lipid"/>
    <property type="evidence" value="ECO:0007669"/>
    <property type="project" value="TreeGrafter"/>
</dbReference>
<dbReference type="GO" id="GO:0042594">
    <property type="term" value="P:response to starvation"/>
    <property type="evidence" value="ECO:0007669"/>
    <property type="project" value="TreeGrafter"/>
</dbReference>
<dbReference type="FunFam" id="3.40.449.10:FF:000010">
    <property type="entry name" value="Phosphoenolpyruvate carboxykinase [GTP]"/>
    <property type="match status" value="1"/>
</dbReference>
<dbReference type="Gene3D" id="3.90.228.20">
    <property type="match status" value="1"/>
</dbReference>
<dbReference type="Gene3D" id="3.40.449.10">
    <property type="entry name" value="Phosphoenolpyruvate Carboxykinase, domain 1"/>
    <property type="match status" value="1"/>
</dbReference>
<dbReference type="Gene3D" id="2.170.8.10">
    <property type="entry name" value="Phosphoenolpyruvate Carboxykinase, domain 2"/>
    <property type="match status" value="1"/>
</dbReference>
<dbReference type="HAMAP" id="MF_00452">
    <property type="entry name" value="PEPCK_GTP"/>
    <property type="match status" value="1"/>
</dbReference>
<dbReference type="InterPro" id="IPR018091">
    <property type="entry name" value="PEP_carboxykin_GTP_CS"/>
</dbReference>
<dbReference type="InterPro" id="IPR013035">
    <property type="entry name" value="PEP_carboxykinase_C"/>
</dbReference>
<dbReference type="InterPro" id="IPR008209">
    <property type="entry name" value="PEP_carboxykinase_GTP"/>
</dbReference>
<dbReference type="InterPro" id="IPR035077">
    <property type="entry name" value="PEP_carboxykinase_GTP_C"/>
</dbReference>
<dbReference type="InterPro" id="IPR035078">
    <property type="entry name" value="PEP_carboxykinase_GTP_N"/>
</dbReference>
<dbReference type="InterPro" id="IPR008210">
    <property type="entry name" value="PEP_carboxykinase_N"/>
</dbReference>
<dbReference type="NCBIfam" id="NF003253">
    <property type="entry name" value="PRK04210.1"/>
    <property type="match status" value="1"/>
</dbReference>
<dbReference type="PANTHER" id="PTHR11561">
    <property type="entry name" value="PHOSPHOENOLPYRUVATE CARBOXYKINASE"/>
    <property type="match status" value="1"/>
</dbReference>
<dbReference type="PANTHER" id="PTHR11561:SF0">
    <property type="entry name" value="PHOSPHOENOLPYRUVATE CARBOXYKINASE [GTP]-RELATED"/>
    <property type="match status" value="1"/>
</dbReference>
<dbReference type="Pfam" id="PF00821">
    <property type="entry name" value="PEPCK_GTP"/>
    <property type="match status" value="1"/>
</dbReference>
<dbReference type="Pfam" id="PF17297">
    <property type="entry name" value="PEPCK_N"/>
    <property type="match status" value="1"/>
</dbReference>
<dbReference type="PIRSF" id="PIRSF001348">
    <property type="entry name" value="PEP_carboxykinase_GTP"/>
    <property type="match status" value="1"/>
</dbReference>
<dbReference type="SUPFAM" id="SSF68923">
    <property type="entry name" value="PEP carboxykinase N-terminal domain"/>
    <property type="match status" value="1"/>
</dbReference>
<dbReference type="SUPFAM" id="SSF53795">
    <property type="entry name" value="PEP carboxykinase-like"/>
    <property type="match status" value="1"/>
</dbReference>
<dbReference type="PROSITE" id="PS00505">
    <property type="entry name" value="PEPCK_GTP"/>
    <property type="match status" value="1"/>
</dbReference>
<name>PCKG_THESM</name>
<accession>C6A0S4</accession>
<evidence type="ECO:0000255" key="1">
    <source>
        <dbReference type="HAMAP-Rule" id="MF_00452"/>
    </source>
</evidence>
<evidence type="ECO:0000256" key="2">
    <source>
        <dbReference type="SAM" id="MobiDB-lite"/>
    </source>
</evidence>
<sequence length="622" mass="71790">MTPEDYLKKRLDPEQFEKIKGIDNPELNEFLAKYIELLNPARVFICTDSKEDENYIRRRAIEYGEEKSLAMEGHTIHYDGYYDQARDKARTKILVPKGVEIPFINTMDREKGLKEIHEIMKDIAKGKELFVCFFVLGPKNSVFTIPAVQLTDSAYVAHSEFILYRKGYEEFKRLGREAKFLKFVHSAGELDERKTSKNIDKRRVYIDLEGETVYSANTQYGGNTIGLKKLAFRLTIKRAVEEGWLSEHMFLMRINGPNGRKTYFTGAYPSMCGKTSTAMISWENIVGDDLTFIVDMKGEARGANVEKGVFGIIQGVNQEDDPIIWEVLHSPNEIIFSNVLVKDGKPYWNEMGIPIPDEGENHSGKWWRGKKDSEGNEISPSHKNARFTVSLDAFPNTDLEALETPCGVRVGGMIFGGRDADTWPPVREAFDWAHGVITMGAALESETTAATLGKEGVRAFNPMAILDFLSVHIGKYLKNYLEFEKKLRIKPKIFAVNYFLREKDGKWLNHKLDKSVWLKWMELRVHGDVDAIKTPVGYIPKYEDLKRLFKEVLNKDYSREDYEKQFVIRVPEFLAKIERIEKIYRDVGNIPEELFKVLEEERHRLIEAKEKYGDYISPFKFL</sequence>
<protein>
    <recommendedName>
        <fullName evidence="1">Phosphoenolpyruvate carboxykinase [GTP]</fullName>
        <shortName evidence="1">PEP carboxykinase</shortName>
        <shortName evidence="1">PEPCK</shortName>
        <ecNumber evidence="1">4.1.1.32</ecNumber>
    </recommendedName>
</protein>
<comment type="function">
    <text evidence="1">Catalyzes the conversion of oxaloacetate (OAA) to phosphoenolpyruvate (PEP), the rate-limiting step in the metabolic pathway that produces glucose from lactate and other precursors derived from the citric acid cycle.</text>
</comment>
<comment type="catalytic activity">
    <reaction evidence="1">
        <text>oxaloacetate + GTP = phosphoenolpyruvate + GDP + CO2</text>
        <dbReference type="Rhea" id="RHEA:10388"/>
        <dbReference type="ChEBI" id="CHEBI:16452"/>
        <dbReference type="ChEBI" id="CHEBI:16526"/>
        <dbReference type="ChEBI" id="CHEBI:37565"/>
        <dbReference type="ChEBI" id="CHEBI:58189"/>
        <dbReference type="ChEBI" id="CHEBI:58702"/>
        <dbReference type="EC" id="4.1.1.32"/>
    </reaction>
</comment>
<comment type="cofactor">
    <cofactor evidence="1">
        <name>Mn(2+)</name>
        <dbReference type="ChEBI" id="CHEBI:29035"/>
    </cofactor>
    <text evidence="1">Binds 1 Mn(2+) ion per subunit.</text>
</comment>
<comment type="pathway">
    <text evidence="1">Carbohydrate biosynthesis; gluconeogenesis.</text>
</comment>
<comment type="subcellular location">
    <subcellularLocation>
        <location evidence="1">Cytoplasm</location>
    </subcellularLocation>
</comment>
<comment type="similarity">
    <text evidence="1">Belongs to the phosphoenolpyruvate carboxykinase [GTP] family.</text>
</comment>
<reference key="1">
    <citation type="journal article" date="2009" name="Appl. Environ. Microbiol.">
        <title>Metabolic versatility and indigenous origin of the archaeon Thermococcus sibiricus, isolated from a siberian oil reservoir, as revealed by genome analysis.</title>
        <authorList>
            <person name="Mardanov A.V."/>
            <person name="Ravin N.V."/>
            <person name="Svetlitchnyi V.A."/>
            <person name="Beletsky A.V."/>
            <person name="Miroshnichenko M.L."/>
            <person name="Bonch-Osmolovskaya E.A."/>
            <person name="Skryabin K.G."/>
        </authorList>
    </citation>
    <scope>NUCLEOTIDE SEQUENCE [LARGE SCALE GENOMIC DNA]</scope>
    <source>
        <strain>DSM 12597 / MM 739</strain>
    </source>
</reference>
<keyword id="KW-0963">Cytoplasm</keyword>
<keyword id="KW-0210">Decarboxylase</keyword>
<keyword id="KW-0312">Gluconeogenesis</keyword>
<keyword id="KW-0342">GTP-binding</keyword>
<keyword id="KW-0456">Lyase</keyword>
<keyword id="KW-0464">Manganese</keyword>
<keyword id="KW-0479">Metal-binding</keyword>
<keyword id="KW-0547">Nucleotide-binding</keyword>
<keyword id="KW-1185">Reference proteome</keyword>
<proteinExistence type="inferred from homology"/>
<feature type="chain" id="PRO_1000206234" description="Phosphoenolpyruvate carboxykinase [GTP]">
    <location>
        <begin position="1"/>
        <end position="622"/>
    </location>
</feature>
<feature type="region of interest" description="Disordered" evidence="2">
    <location>
        <begin position="360"/>
        <end position="381"/>
    </location>
</feature>
<feature type="compositionally biased region" description="Basic and acidic residues" evidence="2">
    <location>
        <begin position="360"/>
        <end position="374"/>
    </location>
</feature>
<feature type="active site" evidence="1">
    <location>
        <position position="272"/>
    </location>
</feature>
<feature type="binding site" evidence="1">
    <location>
        <position position="86"/>
    </location>
    <ligand>
        <name>substrate</name>
    </ligand>
</feature>
<feature type="binding site" evidence="1">
    <location>
        <begin position="220"/>
        <end position="222"/>
    </location>
    <ligand>
        <name>substrate</name>
    </ligand>
</feature>
<feature type="binding site" evidence="1">
    <location>
        <position position="229"/>
    </location>
    <ligand>
        <name>Mn(2+)</name>
        <dbReference type="ChEBI" id="CHEBI:29035"/>
    </ligand>
</feature>
<feature type="binding site" evidence="1">
    <location>
        <position position="248"/>
    </location>
    <ligand>
        <name>Mn(2+)</name>
        <dbReference type="ChEBI" id="CHEBI:29035"/>
    </ligand>
</feature>
<feature type="binding site" evidence="1">
    <location>
        <position position="270"/>
    </location>
    <ligand>
        <name>substrate</name>
    </ligand>
</feature>
<feature type="binding site" evidence="1">
    <location>
        <begin position="271"/>
        <end position="276"/>
    </location>
    <ligand>
        <name>GTP</name>
        <dbReference type="ChEBI" id="CHEBI:37565"/>
    </ligand>
</feature>
<feature type="binding site" evidence="1">
    <location>
        <position position="289"/>
    </location>
    <ligand>
        <name>Mn(2+)</name>
        <dbReference type="ChEBI" id="CHEBI:29035"/>
    </ligand>
</feature>
<feature type="binding site" evidence="1">
    <location>
        <begin position="384"/>
        <end position="386"/>
    </location>
    <ligand>
        <name>substrate</name>
    </ligand>
</feature>
<feature type="binding site" evidence="1">
    <location>
        <position position="386"/>
    </location>
    <ligand>
        <name>GTP</name>
        <dbReference type="ChEBI" id="CHEBI:37565"/>
    </ligand>
</feature>
<feature type="binding site" evidence="1">
    <location>
        <position position="418"/>
    </location>
    <ligand>
        <name>GTP</name>
        <dbReference type="ChEBI" id="CHEBI:37565"/>
    </ligand>
</feature>
<organism>
    <name type="scientific">Thermococcus sibiricus (strain DSM 12597 / MM 739)</name>
    <dbReference type="NCBI Taxonomy" id="604354"/>
    <lineage>
        <taxon>Archaea</taxon>
        <taxon>Methanobacteriati</taxon>
        <taxon>Methanobacteriota</taxon>
        <taxon>Thermococci</taxon>
        <taxon>Thermococcales</taxon>
        <taxon>Thermococcaceae</taxon>
        <taxon>Thermococcus</taxon>
    </lineage>
</organism>
<gene>
    <name evidence="1" type="primary">pckG</name>
    <name type="ordered locus">TSIB_0151</name>
</gene>